<feature type="chain" id="PRO_0000254199" description="ATP synthase subunit beta">
    <location>
        <begin position="1"/>
        <end position="460"/>
    </location>
</feature>
<feature type="binding site" evidence="1">
    <location>
        <begin position="148"/>
        <end position="155"/>
    </location>
    <ligand>
        <name>ATP</name>
        <dbReference type="ChEBI" id="CHEBI:30616"/>
    </ligand>
</feature>
<reference key="1">
    <citation type="journal article" date="2006" name="Nat. Biotechnol.">
        <title>Genome sequence of the ubiquitous hydrocarbon-degrading marine bacterium Alcanivorax borkumensis.</title>
        <authorList>
            <person name="Schneiker S."/>
            <person name="Martins dos Santos V.A.P."/>
            <person name="Bartels D."/>
            <person name="Bekel T."/>
            <person name="Brecht M."/>
            <person name="Buhrmester J."/>
            <person name="Chernikova T.N."/>
            <person name="Denaro R."/>
            <person name="Ferrer M."/>
            <person name="Gertler C."/>
            <person name="Goesmann A."/>
            <person name="Golyshina O.V."/>
            <person name="Kaminski F."/>
            <person name="Khachane A.N."/>
            <person name="Lang S."/>
            <person name="Linke B."/>
            <person name="McHardy A.C."/>
            <person name="Meyer F."/>
            <person name="Nechitaylo T."/>
            <person name="Puehler A."/>
            <person name="Regenhardt D."/>
            <person name="Rupp O."/>
            <person name="Sabirova J.S."/>
            <person name="Selbitschka W."/>
            <person name="Yakimov M.M."/>
            <person name="Timmis K.N."/>
            <person name="Vorhoelter F.-J."/>
            <person name="Weidner S."/>
            <person name="Kaiser O."/>
            <person name="Golyshin P.N."/>
        </authorList>
    </citation>
    <scope>NUCLEOTIDE SEQUENCE [LARGE SCALE GENOMIC DNA]</scope>
    <source>
        <strain>ATCC 700651 / DSM 11573 / NCIMB 13689 / SK2</strain>
    </source>
</reference>
<evidence type="ECO:0000255" key="1">
    <source>
        <dbReference type="HAMAP-Rule" id="MF_01347"/>
    </source>
</evidence>
<dbReference type="EC" id="7.1.2.2" evidence="1"/>
<dbReference type="EMBL" id="AM286690">
    <property type="protein sequence ID" value="CAL18174.1"/>
    <property type="molecule type" value="Genomic_DNA"/>
</dbReference>
<dbReference type="RefSeq" id="WP_011589997.1">
    <property type="nucleotide sequence ID" value="NC_008260.1"/>
</dbReference>
<dbReference type="SMR" id="Q0VKX4"/>
<dbReference type="STRING" id="393595.ABO_2726"/>
<dbReference type="KEGG" id="abo:ABO_2726"/>
<dbReference type="eggNOG" id="COG0055">
    <property type="taxonomic scope" value="Bacteria"/>
</dbReference>
<dbReference type="HOGENOM" id="CLU_022398_0_2_6"/>
<dbReference type="OrthoDB" id="9801639at2"/>
<dbReference type="Proteomes" id="UP000008871">
    <property type="component" value="Chromosome"/>
</dbReference>
<dbReference type="GO" id="GO:0005886">
    <property type="term" value="C:plasma membrane"/>
    <property type="evidence" value="ECO:0007669"/>
    <property type="project" value="UniProtKB-SubCell"/>
</dbReference>
<dbReference type="GO" id="GO:0045259">
    <property type="term" value="C:proton-transporting ATP synthase complex"/>
    <property type="evidence" value="ECO:0007669"/>
    <property type="project" value="UniProtKB-KW"/>
</dbReference>
<dbReference type="GO" id="GO:0005524">
    <property type="term" value="F:ATP binding"/>
    <property type="evidence" value="ECO:0007669"/>
    <property type="project" value="UniProtKB-UniRule"/>
</dbReference>
<dbReference type="GO" id="GO:0016887">
    <property type="term" value="F:ATP hydrolysis activity"/>
    <property type="evidence" value="ECO:0007669"/>
    <property type="project" value="InterPro"/>
</dbReference>
<dbReference type="GO" id="GO:0046933">
    <property type="term" value="F:proton-transporting ATP synthase activity, rotational mechanism"/>
    <property type="evidence" value="ECO:0007669"/>
    <property type="project" value="UniProtKB-UniRule"/>
</dbReference>
<dbReference type="CDD" id="cd18110">
    <property type="entry name" value="ATP-synt_F1_beta_C"/>
    <property type="match status" value="1"/>
</dbReference>
<dbReference type="CDD" id="cd18115">
    <property type="entry name" value="ATP-synt_F1_beta_N"/>
    <property type="match status" value="1"/>
</dbReference>
<dbReference type="CDD" id="cd01133">
    <property type="entry name" value="F1-ATPase_beta_CD"/>
    <property type="match status" value="1"/>
</dbReference>
<dbReference type="FunFam" id="1.10.1140.10:FF:000001">
    <property type="entry name" value="ATP synthase subunit beta"/>
    <property type="match status" value="1"/>
</dbReference>
<dbReference type="FunFam" id="3.40.50.300:FF:000004">
    <property type="entry name" value="ATP synthase subunit beta"/>
    <property type="match status" value="1"/>
</dbReference>
<dbReference type="Gene3D" id="2.40.10.170">
    <property type="match status" value="1"/>
</dbReference>
<dbReference type="Gene3D" id="1.10.1140.10">
    <property type="entry name" value="Bovine Mitochondrial F1-atpase, Atp Synthase Beta Chain, Chain D, domain 3"/>
    <property type="match status" value="1"/>
</dbReference>
<dbReference type="Gene3D" id="3.40.50.300">
    <property type="entry name" value="P-loop containing nucleotide triphosphate hydrolases"/>
    <property type="match status" value="1"/>
</dbReference>
<dbReference type="HAMAP" id="MF_01347">
    <property type="entry name" value="ATP_synth_beta_bact"/>
    <property type="match status" value="1"/>
</dbReference>
<dbReference type="InterPro" id="IPR003593">
    <property type="entry name" value="AAA+_ATPase"/>
</dbReference>
<dbReference type="InterPro" id="IPR055190">
    <property type="entry name" value="ATP-synt_VA_C"/>
</dbReference>
<dbReference type="InterPro" id="IPR005722">
    <property type="entry name" value="ATP_synth_F1_bsu"/>
</dbReference>
<dbReference type="InterPro" id="IPR020003">
    <property type="entry name" value="ATPase_a/bsu_AS"/>
</dbReference>
<dbReference type="InterPro" id="IPR050053">
    <property type="entry name" value="ATPase_alpha/beta_chains"/>
</dbReference>
<dbReference type="InterPro" id="IPR004100">
    <property type="entry name" value="ATPase_F1/V1/A1_a/bsu_N"/>
</dbReference>
<dbReference type="InterPro" id="IPR036121">
    <property type="entry name" value="ATPase_F1/V1/A1_a/bsu_N_sf"/>
</dbReference>
<dbReference type="InterPro" id="IPR000194">
    <property type="entry name" value="ATPase_F1/V1/A1_a/bsu_nucl-bd"/>
</dbReference>
<dbReference type="InterPro" id="IPR024034">
    <property type="entry name" value="ATPase_F1/V1_b/a_C"/>
</dbReference>
<dbReference type="InterPro" id="IPR027417">
    <property type="entry name" value="P-loop_NTPase"/>
</dbReference>
<dbReference type="NCBIfam" id="TIGR01039">
    <property type="entry name" value="atpD"/>
    <property type="match status" value="1"/>
</dbReference>
<dbReference type="PANTHER" id="PTHR15184">
    <property type="entry name" value="ATP SYNTHASE"/>
    <property type="match status" value="1"/>
</dbReference>
<dbReference type="PANTHER" id="PTHR15184:SF71">
    <property type="entry name" value="ATP SYNTHASE SUBUNIT BETA, MITOCHONDRIAL"/>
    <property type="match status" value="1"/>
</dbReference>
<dbReference type="Pfam" id="PF00006">
    <property type="entry name" value="ATP-synt_ab"/>
    <property type="match status" value="1"/>
</dbReference>
<dbReference type="Pfam" id="PF02874">
    <property type="entry name" value="ATP-synt_ab_N"/>
    <property type="match status" value="1"/>
</dbReference>
<dbReference type="Pfam" id="PF22919">
    <property type="entry name" value="ATP-synt_VA_C"/>
    <property type="match status" value="1"/>
</dbReference>
<dbReference type="SMART" id="SM00382">
    <property type="entry name" value="AAA"/>
    <property type="match status" value="1"/>
</dbReference>
<dbReference type="SUPFAM" id="SSF47917">
    <property type="entry name" value="C-terminal domain of alpha and beta subunits of F1 ATP synthase"/>
    <property type="match status" value="1"/>
</dbReference>
<dbReference type="SUPFAM" id="SSF50615">
    <property type="entry name" value="N-terminal domain of alpha and beta subunits of F1 ATP synthase"/>
    <property type="match status" value="1"/>
</dbReference>
<dbReference type="SUPFAM" id="SSF52540">
    <property type="entry name" value="P-loop containing nucleoside triphosphate hydrolases"/>
    <property type="match status" value="1"/>
</dbReference>
<dbReference type="PROSITE" id="PS00152">
    <property type="entry name" value="ATPASE_ALPHA_BETA"/>
    <property type="match status" value="1"/>
</dbReference>
<sequence>MSSGRIVQIIGAVIDVEFPREAVPKVYDALSVDGTETTLEVQQQLGDGVVRTIAMGSTEGLKRGLGVTDNGEPIQVPVGTKTLGRIMDVLGRPIDEAGPIGEEERMPIHRAAPTYADQAATNELLETGIKVIDLVCPFAKGGKVGLFGGAGVGKTVNMMELIRNIAIEHSGFSVFAGVGERTREGNDFYHEMKDSNVLDKVSLVYGQMNEPPGNRLRVALTGLTMAEKFRDEGRDVLFFVDNIYRYTLAGTEVSALLGRMPSAVGYQPTLAEEMGVLQERITSTKTGSITSVQAVYVPADDLTDPSPATTFAHLDSTVSLSRDIASKGIYPAIDPLDSTSRQLDPLVIGQEHYDIARGVQTVLQRFKELKDIIAILGMDELSEDDKLIVSRARKIERYLSQPFFVAEVFTGSPGKYVSLKDTLAGFKGILGGDYDHIPEQDFYMKGSIDEVIEAYNKRSK</sequence>
<protein>
    <recommendedName>
        <fullName evidence="1">ATP synthase subunit beta</fullName>
        <ecNumber evidence="1">7.1.2.2</ecNumber>
    </recommendedName>
    <alternativeName>
        <fullName evidence="1">ATP synthase F1 sector subunit beta</fullName>
    </alternativeName>
    <alternativeName>
        <fullName evidence="1">F-ATPase subunit beta</fullName>
    </alternativeName>
</protein>
<accession>Q0VKX4</accession>
<name>ATPB_ALCBS</name>
<comment type="function">
    <text evidence="1">Produces ATP from ADP in the presence of a proton gradient across the membrane. The catalytic sites are hosted primarily by the beta subunits.</text>
</comment>
<comment type="catalytic activity">
    <reaction evidence="1">
        <text>ATP + H2O + 4 H(+)(in) = ADP + phosphate + 5 H(+)(out)</text>
        <dbReference type="Rhea" id="RHEA:57720"/>
        <dbReference type="ChEBI" id="CHEBI:15377"/>
        <dbReference type="ChEBI" id="CHEBI:15378"/>
        <dbReference type="ChEBI" id="CHEBI:30616"/>
        <dbReference type="ChEBI" id="CHEBI:43474"/>
        <dbReference type="ChEBI" id="CHEBI:456216"/>
        <dbReference type="EC" id="7.1.2.2"/>
    </reaction>
</comment>
<comment type="subunit">
    <text evidence="1">F-type ATPases have 2 components, CF(1) - the catalytic core - and CF(0) - the membrane proton channel. CF(1) has five subunits: alpha(3), beta(3), gamma(1), delta(1), epsilon(1). CF(0) has three main subunits: a(1), b(2) and c(9-12). The alpha and beta chains form an alternating ring which encloses part of the gamma chain. CF(1) is attached to CF(0) by a central stalk formed by the gamma and epsilon chains, while a peripheral stalk is formed by the delta and b chains.</text>
</comment>
<comment type="subcellular location">
    <subcellularLocation>
        <location evidence="1">Cell inner membrane</location>
        <topology evidence="1">Peripheral membrane protein</topology>
    </subcellularLocation>
</comment>
<comment type="similarity">
    <text evidence="1">Belongs to the ATPase alpha/beta chains family.</text>
</comment>
<gene>
    <name evidence="1" type="primary">atpD</name>
    <name type="ordered locus">ABO_2726</name>
</gene>
<organism>
    <name type="scientific">Alcanivorax borkumensis (strain ATCC 700651 / DSM 11573 / NCIMB 13689 / SK2)</name>
    <dbReference type="NCBI Taxonomy" id="393595"/>
    <lineage>
        <taxon>Bacteria</taxon>
        <taxon>Pseudomonadati</taxon>
        <taxon>Pseudomonadota</taxon>
        <taxon>Gammaproteobacteria</taxon>
        <taxon>Oceanospirillales</taxon>
        <taxon>Alcanivoracaceae</taxon>
        <taxon>Alcanivorax</taxon>
    </lineage>
</organism>
<keyword id="KW-0066">ATP synthesis</keyword>
<keyword id="KW-0067">ATP-binding</keyword>
<keyword id="KW-0997">Cell inner membrane</keyword>
<keyword id="KW-1003">Cell membrane</keyword>
<keyword id="KW-0139">CF(1)</keyword>
<keyword id="KW-0375">Hydrogen ion transport</keyword>
<keyword id="KW-0406">Ion transport</keyword>
<keyword id="KW-0472">Membrane</keyword>
<keyword id="KW-0547">Nucleotide-binding</keyword>
<keyword id="KW-1185">Reference proteome</keyword>
<keyword id="KW-1278">Translocase</keyword>
<keyword id="KW-0813">Transport</keyword>
<proteinExistence type="inferred from homology"/>